<organism>
    <name type="scientific">Thermoplasma volcanium (strain ATCC 51530 / DSM 4299 / JCM 9571 / NBRC 15438 / GSS1)</name>
    <dbReference type="NCBI Taxonomy" id="273116"/>
    <lineage>
        <taxon>Archaea</taxon>
        <taxon>Methanobacteriati</taxon>
        <taxon>Thermoplasmatota</taxon>
        <taxon>Thermoplasmata</taxon>
        <taxon>Thermoplasmatales</taxon>
        <taxon>Thermoplasmataceae</taxon>
        <taxon>Thermoplasma</taxon>
    </lineage>
</organism>
<dbReference type="EMBL" id="BA000011">
    <property type="protein sequence ID" value="BAB59726.1"/>
    <property type="status" value="ALT_INIT"/>
    <property type="molecule type" value="Genomic_DNA"/>
</dbReference>
<dbReference type="RefSeq" id="WP_048054092.1">
    <property type="nucleotide sequence ID" value="NC_002689.2"/>
</dbReference>
<dbReference type="SMR" id="Q97B73"/>
<dbReference type="STRING" id="273116.gene:9381371"/>
<dbReference type="PaxDb" id="273116-14324799"/>
<dbReference type="DNASU" id="1441691"/>
<dbReference type="GeneID" id="1441691"/>
<dbReference type="KEGG" id="tvo:TVG0572464"/>
<dbReference type="eggNOG" id="arCOG00215">
    <property type="taxonomic scope" value="Archaea"/>
</dbReference>
<dbReference type="HOGENOM" id="CLU_030805_0_5_2"/>
<dbReference type="OrthoDB" id="372037at2157"/>
<dbReference type="Proteomes" id="UP000001017">
    <property type="component" value="Chromosome"/>
</dbReference>
<dbReference type="CDD" id="cd00885">
    <property type="entry name" value="cinA"/>
    <property type="match status" value="1"/>
</dbReference>
<dbReference type="Gene3D" id="3.40.980.10">
    <property type="entry name" value="MoaB/Mog-like domain"/>
    <property type="match status" value="1"/>
</dbReference>
<dbReference type="HAMAP" id="MF_00226_A">
    <property type="entry name" value="CinA_A"/>
    <property type="match status" value="1"/>
</dbReference>
<dbReference type="InterPro" id="IPR050101">
    <property type="entry name" value="CinA"/>
</dbReference>
<dbReference type="InterPro" id="IPR023055">
    <property type="entry name" value="CinA_Arc"/>
</dbReference>
<dbReference type="InterPro" id="IPR036425">
    <property type="entry name" value="MoaB/Mog-like_dom_sf"/>
</dbReference>
<dbReference type="InterPro" id="IPR001453">
    <property type="entry name" value="MoaB/Mog_dom"/>
</dbReference>
<dbReference type="NCBIfam" id="NF002291">
    <property type="entry name" value="PRK01215.1"/>
    <property type="match status" value="1"/>
</dbReference>
<dbReference type="PANTHER" id="PTHR13939">
    <property type="entry name" value="NICOTINAMIDE-NUCLEOTIDE AMIDOHYDROLASE PNCC"/>
    <property type="match status" value="1"/>
</dbReference>
<dbReference type="PANTHER" id="PTHR13939:SF0">
    <property type="entry name" value="NMN AMIDOHYDROLASE-LIKE PROTEIN YFAY"/>
    <property type="match status" value="1"/>
</dbReference>
<dbReference type="Pfam" id="PF00994">
    <property type="entry name" value="MoCF_biosynth"/>
    <property type="match status" value="1"/>
</dbReference>
<dbReference type="SMART" id="SM00852">
    <property type="entry name" value="MoCF_biosynth"/>
    <property type="match status" value="1"/>
</dbReference>
<dbReference type="SUPFAM" id="SSF53218">
    <property type="entry name" value="Molybdenum cofactor biosynthesis proteins"/>
    <property type="match status" value="1"/>
</dbReference>
<name>Y584_THEVO</name>
<reference key="1">
    <citation type="journal article" date="2000" name="Proc. Natl. Acad. Sci. U.S.A.">
        <title>Archaeal adaptation to higher temperatures revealed by genomic sequence of Thermoplasma volcanium.</title>
        <authorList>
            <person name="Kawashima T."/>
            <person name="Amano N."/>
            <person name="Koike H."/>
            <person name="Makino S."/>
            <person name="Higuchi S."/>
            <person name="Kawashima-Ohya Y."/>
            <person name="Watanabe K."/>
            <person name="Yamazaki M."/>
            <person name="Kanehori K."/>
            <person name="Kawamoto T."/>
            <person name="Nunoshiba T."/>
            <person name="Yamamoto Y."/>
            <person name="Aramaki H."/>
            <person name="Makino K."/>
            <person name="Suzuki M."/>
        </authorList>
    </citation>
    <scope>NUCLEOTIDE SEQUENCE [LARGE SCALE GENOMIC DNA]</scope>
    <source>
        <strain>ATCC 51530 / DSM 4299 / JCM 9571 / NBRC 15438 / GSS1</strain>
    </source>
</reference>
<proteinExistence type="inferred from homology"/>
<gene>
    <name type="ordered locus">TV0584</name>
    <name type="ORF">TVG0572464</name>
</gene>
<feature type="chain" id="PRO_0000336543" description="Protein TV0584">
    <location>
        <begin position="1"/>
        <end position="256"/>
    </location>
</feature>
<sequence>MKDAVVITVGNEVLKGRTVNTNASFIGNFLTYQGYRVKLGLTVMDDLEDISWAFKTAMDRGDVIVSSGGLGPTFDDMTVEGFAKAIGSDNKLNQDALAMIEEKYKNIEITPERKKMAMMPEVCKPIRNPVGTAPGLLCSVGGKKVVILPGVPMEMQALLESMRDSLAIENSCYFDESINITGIMESTFAPYVERVMREVDGVYVKSHPKNIEVVNPSLEIEVSAYDVSQEAARKKVKDAIARIRAYAETILDSKDK</sequence>
<evidence type="ECO:0000255" key="1">
    <source>
        <dbReference type="HAMAP-Rule" id="MF_00226"/>
    </source>
</evidence>
<evidence type="ECO:0000305" key="2"/>
<accession>Q97B73</accession>
<protein>
    <recommendedName>
        <fullName evidence="1">Protein TV0584</fullName>
    </recommendedName>
</protein>
<comment type="similarity">
    <text evidence="1">Belongs to the CinA family.</text>
</comment>
<comment type="sequence caution" evidence="2">
    <conflict type="erroneous initiation">
        <sequence resource="EMBL-CDS" id="BAB59726"/>
    </conflict>
</comment>